<reference key="1">
    <citation type="submission" date="2006-03" db="EMBL/GenBank/DDBJ databases">
        <title>Complete sequence of chromosome of Psychrobacter cryohalolentis K5.</title>
        <authorList>
            <consortium name="US DOE Joint Genome Institute"/>
            <person name="Copeland A."/>
            <person name="Lucas S."/>
            <person name="Lapidus A."/>
            <person name="Barry K."/>
            <person name="Detter J.C."/>
            <person name="Glavina T."/>
            <person name="Hammon N."/>
            <person name="Israni S."/>
            <person name="Dalin E."/>
            <person name="Tice H."/>
            <person name="Pitluck S."/>
            <person name="Brettin T."/>
            <person name="Bruce D."/>
            <person name="Han C."/>
            <person name="Tapia R."/>
            <person name="Sims D.R."/>
            <person name="Gilna P."/>
            <person name="Schmutz J."/>
            <person name="Larimer F."/>
            <person name="Land M."/>
            <person name="Hauser L."/>
            <person name="Kyrpides N."/>
            <person name="Kim E."/>
            <person name="Richardson P."/>
        </authorList>
    </citation>
    <scope>NUCLEOTIDE SEQUENCE [LARGE SCALE GENOMIC DNA]</scope>
    <source>
        <strain>ATCC BAA-1226 / DSM 17306 / VKM B-2378 / K5</strain>
    </source>
</reference>
<feature type="chain" id="PRO_0000258256" description="Formimidoylglutamase">
    <location>
        <begin position="1"/>
        <end position="346"/>
    </location>
</feature>
<feature type="binding site" evidence="1">
    <location>
        <position position="145"/>
    </location>
    <ligand>
        <name>Mn(2+)</name>
        <dbReference type="ChEBI" id="CHEBI:29035"/>
        <label>1</label>
    </ligand>
</feature>
<feature type="binding site" evidence="1">
    <location>
        <position position="180"/>
    </location>
    <ligand>
        <name>Mn(2+)</name>
        <dbReference type="ChEBI" id="CHEBI:29035"/>
        <label>1</label>
    </ligand>
</feature>
<feature type="binding site" evidence="1">
    <location>
        <position position="180"/>
    </location>
    <ligand>
        <name>Mn(2+)</name>
        <dbReference type="ChEBI" id="CHEBI:29035"/>
        <label>2</label>
    </ligand>
</feature>
<feature type="binding site" evidence="1">
    <location>
        <position position="182"/>
    </location>
    <ligand>
        <name>Mn(2+)</name>
        <dbReference type="ChEBI" id="CHEBI:29035"/>
        <label>2</label>
    </ligand>
</feature>
<feature type="binding site" evidence="1">
    <location>
        <position position="184"/>
    </location>
    <ligand>
        <name>Mn(2+)</name>
        <dbReference type="ChEBI" id="CHEBI:29035"/>
        <label>1</label>
    </ligand>
</feature>
<feature type="binding site" evidence="1">
    <location>
        <position position="271"/>
    </location>
    <ligand>
        <name>Mn(2+)</name>
        <dbReference type="ChEBI" id="CHEBI:29035"/>
        <label>1</label>
    </ligand>
</feature>
<feature type="binding site" evidence="1">
    <location>
        <position position="271"/>
    </location>
    <ligand>
        <name>Mn(2+)</name>
        <dbReference type="ChEBI" id="CHEBI:29035"/>
        <label>2</label>
    </ligand>
</feature>
<feature type="binding site" evidence="1">
    <location>
        <position position="273"/>
    </location>
    <ligand>
        <name>Mn(2+)</name>
        <dbReference type="ChEBI" id="CHEBI:29035"/>
        <label>2</label>
    </ligand>
</feature>
<evidence type="ECO:0000255" key="1">
    <source>
        <dbReference type="HAMAP-Rule" id="MF_00737"/>
    </source>
</evidence>
<evidence type="ECO:0000305" key="2"/>
<organism>
    <name type="scientific">Psychrobacter cryohalolentis (strain ATCC BAA-1226 / DSM 17306 / VKM B-2378 / K5)</name>
    <dbReference type="NCBI Taxonomy" id="335284"/>
    <lineage>
        <taxon>Bacteria</taxon>
        <taxon>Pseudomonadati</taxon>
        <taxon>Pseudomonadota</taxon>
        <taxon>Gammaproteobacteria</taxon>
        <taxon>Moraxellales</taxon>
        <taxon>Moraxellaceae</taxon>
        <taxon>Psychrobacter</taxon>
    </lineage>
</organism>
<proteinExistence type="inferred from homology"/>
<comment type="function">
    <text evidence="1">Catalyzes the conversion of N-formimidoyl-L-glutamate to L-glutamate and formamide.</text>
</comment>
<comment type="catalytic activity">
    <reaction evidence="1">
        <text>N-formimidoyl-L-glutamate + H2O = formamide + L-glutamate</text>
        <dbReference type="Rhea" id="RHEA:22492"/>
        <dbReference type="ChEBI" id="CHEBI:15377"/>
        <dbReference type="ChEBI" id="CHEBI:16397"/>
        <dbReference type="ChEBI" id="CHEBI:29985"/>
        <dbReference type="ChEBI" id="CHEBI:58928"/>
        <dbReference type="EC" id="3.5.3.8"/>
    </reaction>
</comment>
<comment type="cofactor">
    <cofactor evidence="1">
        <name>Mn(2+)</name>
        <dbReference type="ChEBI" id="CHEBI:29035"/>
    </cofactor>
    <text evidence="1">Binds 2 manganese ions per subunit.</text>
</comment>
<comment type="pathway">
    <text evidence="1">Amino-acid degradation; L-histidine degradation into L-glutamate; L-glutamate from N-formimidoyl-L-glutamate (hydrolase route): step 1/1.</text>
</comment>
<comment type="similarity">
    <text evidence="1">Belongs to the arginase family.</text>
</comment>
<comment type="sequence caution" evidence="2">
    <conflict type="erroneous initiation">
        <sequence resource="EMBL-CDS" id="ABE75710"/>
    </conflict>
</comment>
<gene>
    <name evidence="1" type="primary">hutG</name>
    <name type="ordered locus">Pcryo_1933</name>
</gene>
<sequence length="346" mass="37797">MSHTVADMSRWTGRAEPFETARARYWYQLAQHYAFDSTSQQNGQRIGLVGFACDQGVRRNQGRVGAKAAPPLIRQAFAALPVIAELQQRFDGQLPTLLGDAGDIHCHDNDDFAANMLEQAQLNYADKVSQIIKQGGLPIGLGGGHAIAYGSFLGLWQALQQTDTNSDTDALPRIGIINFDAHLDIRQSDVATSGTPFRQIAEHLDEQGQPFNYCCIGVSRFSNTAALFDRAEQLGVDIISDEDCTNKKWKKIAAQIADFIESVDIIYLTIDMDCLPSSVVPGVSAPAAYGIELSFVERAVKLILCSGKVKVADIAEINPTFDIDSRSCKVAARLLATIIEQHLLNL</sequence>
<keyword id="KW-0369">Histidine metabolism</keyword>
<keyword id="KW-0378">Hydrolase</keyword>
<keyword id="KW-0464">Manganese</keyword>
<keyword id="KW-0479">Metal-binding</keyword>
<protein>
    <recommendedName>
        <fullName evidence="1">Formimidoylglutamase</fullName>
        <ecNumber evidence="1">3.5.3.8</ecNumber>
    </recommendedName>
    <alternativeName>
        <fullName evidence="1">Formiminoglutamase</fullName>
    </alternativeName>
    <alternativeName>
        <fullName evidence="1">Formiminoglutamate hydrolase</fullName>
    </alternativeName>
</protein>
<accession>Q1Q9E3</accession>
<dbReference type="EC" id="3.5.3.8" evidence="1"/>
<dbReference type="EMBL" id="CP000323">
    <property type="protein sequence ID" value="ABE75710.1"/>
    <property type="status" value="ALT_INIT"/>
    <property type="molecule type" value="Genomic_DNA"/>
</dbReference>
<dbReference type="SMR" id="Q1Q9E3"/>
<dbReference type="STRING" id="335284.Pcryo_1933"/>
<dbReference type="KEGG" id="pcr:Pcryo_1933"/>
<dbReference type="eggNOG" id="COG0010">
    <property type="taxonomic scope" value="Bacteria"/>
</dbReference>
<dbReference type="HOGENOM" id="CLU_039478_2_0_6"/>
<dbReference type="UniPathway" id="UPA00379">
    <property type="reaction ID" value="UER00552"/>
</dbReference>
<dbReference type="Proteomes" id="UP000002425">
    <property type="component" value="Chromosome"/>
</dbReference>
<dbReference type="GO" id="GO:0008783">
    <property type="term" value="F:agmatinase activity"/>
    <property type="evidence" value="ECO:0007669"/>
    <property type="project" value="TreeGrafter"/>
</dbReference>
<dbReference type="GO" id="GO:0050415">
    <property type="term" value="F:formimidoylglutamase activity"/>
    <property type="evidence" value="ECO:0007669"/>
    <property type="project" value="UniProtKB-UniRule"/>
</dbReference>
<dbReference type="GO" id="GO:0030145">
    <property type="term" value="F:manganese ion binding"/>
    <property type="evidence" value="ECO:0007669"/>
    <property type="project" value="UniProtKB-UniRule"/>
</dbReference>
<dbReference type="GO" id="GO:0019556">
    <property type="term" value="P:L-histidine catabolic process to glutamate and formamide"/>
    <property type="evidence" value="ECO:0007669"/>
    <property type="project" value="UniProtKB-UniPathway"/>
</dbReference>
<dbReference type="GO" id="GO:0019557">
    <property type="term" value="P:L-histidine catabolic process to glutamate and formate"/>
    <property type="evidence" value="ECO:0007669"/>
    <property type="project" value="UniProtKB-UniPathway"/>
</dbReference>
<dbReference type="GO" id="GO:0033389">
    <property type="term" value="P:putrescine biosynthetic process from arginine, via agmatine"/>
    <property type="evidence" value="ECO:0007669"/>
    <property type="project" value="TreeGrafter"/>
</dbReference>
<dbReference type="CDD" id="cd09988">
    <property type="entry name" value="Formimidoylglutamase"/>
    <property type="match status" value="1"/>
</dbReference>
<dbReference type="Gene3D" id="3.40.800.10">
    <property type="entry name" value="Ureohydrolase domain"/>
    <property type="match status" value="1"/>
</dbReference>
<dbReference type="HAMAP" id="MF_00737">
    <property type="entry name" value="Formimidoylglutam"/>
    <property type="match status" value="1"/>
</dbReference>
<dbReference type="InterPro" id="IPR005923">
    <property type="entry name" value="HutG"/>
</dbReference>
<dbReference type="InterPro" id="IPR006035">
    <property type="entry name" value="Ureohydrolase"/>
</dbReference>
<dbReference type="InterPro" id="IPR023696">
    <property type="entry name" value="Ureohydrolase_dom_sf"/>
</dbReference>
<dbReference type="NCBIfam" id="TIGR01227">
    <property type="entry name" value="hutG"/>
    <property type="match status" value="1"/>
</dbReference>
<dbReference type="PANTHER" id="PTHR11358">
    <property type="entry name" value="ARGINASE/AGMATINASE"/>
    <property type="match status" value="1"/>
</dbReference>
<dbReference type="PANTHER" id="PTHR11358:SF35">
    <property type="entry name" value="FORMIMIDOYLGLUTAMASE"/>
    <property type="match status" value="1"/>
</dbReference>
<dbReference type="Pfam" id="PF00491">
    <property type="entry name" value="Arginase"/>
    <property type="match status" value="1"/>
</dbReference>
<dbReference type="PIRSF" id="PIRSF036979">
    <property type="entry name" value="Arginase"/>
    <property type="match status" value="1"/>
</dbReference>
<dbReference type="SUPFAM" id="SSF52768">
    <property type="entry name" value="Arginase/deacetylase"/>
    <property type="match status" value="1"/>
</dbReference>
<dbReference type="PROSITE" id="PS51409">
    <property type="entry name" value="ARGINASE_2"/>
    <property type="match status" value="1"/>
</dbReference>
<name>HUTG_PSYCK</name>